<keyword id="KW-0028">Amino-acid biosynthesis</keyword>
<keyword id="KW-0055">Arginine biosynthesis</keyword>
<keyword id="KW-0067">ATP-binding</keyword>
<keyword id="KW-0315">Glutamine amidotransferase</keyword>
<keyword id="KW-0436">Ligase</keyword>
<keyword id="KW-0547">Nucleotide-binding</keyword>
<keyword id="KW-0665">Pyrimidine biosynthesis</keyword>
<protein>
    <recommendedName>
        <fullName evidence="1">Carbamoyl phosphate synthase small chain</fullName>
        <ecNumber evidence="1">6.3.5.5</ecNumber>
    </recommendedName>
    <alternativeName>
        <fullName evidence="1">Carbamoyl phosphate synthetase glutamine chain</fullName>
    </alternativeName>
</protein>
<sequence length="363" mass="40053">MKAFLVLDNGMILEGESFGYESESVGEIVFNTSMAGYQEILTDPSYCNQIITLTYPMIGNYGIHPDNMESSKIQASGLIVREYVDLPSNFMSQKTLSKFLKEYQIPAIQGIDTRKLTRYIRTNGSPNGGIFVAREYSPEFLEKVKSFPGITGTDLAKVVTTSTKYIFGTHTGKKYKLAVYDYGVKTNILRLLDAAGFAVTVYPALTPAEEIMKEGTDAFFLSNGPGDPAPLDYAIDATRKIMEKGYPLFGICLGHQIIGLSLGKKTEKMKFGHRGGNQPVKNLSTGQVEITSQNHGFAVIDDGKSSEPVSFLNLNDNTVEGILKSGYPLLTVQYHPESAPGPNDSRYLFQKFYDLVETTKRGK</sequence>
<evidence type="ECO:0000255" key="1">
    <source>
        <dbReference type="HAMAP-Rule" id="MF_01209"/>
    </source>
</evidence>
<accession>Q04ZG6</accession>
<dbReference type="EC" id="6.3.5.5" evidence="1"/>
<dbReference type="EMBL" id="CP000348">
    <property type="protein sequence ID" value="ABJ79529.1"/>
    <property type="molecule type" value="Genomic_DNA"/>
</dbReference>
<dbReference type="RefSeq" id="WP_011670573.1">
    <property type="nucleotide sequence ID" value="NC_008508.1"/>
</dbReference>
<dbReference type="SMR" id="Q04ZG6"/>
<dbReference type="KEGG" id="lbl:LBL_2116"/>
<dbReference type="PATRIC" id="fig|355276.3.peg.2695"/>
<dbReference type="HOGENOM" id="CLU_035901_1_1_12"/>
<dbReference type="UniPathway" id="UPA00068">
    <property type="reaction ID" value="UER00171"/>
</dbReference>
<dbReference type="UniPathway" id="UPA00070">
    <property type="reaction ID" value="UER00115"/>
</dbReference>
<dbReference type="GO" id="GO:0005524">
    <property type="term" value="F:ATP binding"/>
    <property type="evidence" value="ECO:0007669"/>
    <property type="project" value="UniProtKB-UniRule"/>
</dbReference>
<dbReference type="GO" id="GO:0004088">
    <property type="term" value="F:carbamoyl-phosphate synthase (glutamine-hydrolyzing) activity"/>
    <property type="evidence" value="ECO:0007669"/>
    <property type="project" value="UniProtKB-UniRule"/>
</dbReference>
<dbReference type="GO" id="GO:0004359">
    <property type="term" value="F:glutaminase activity"/>
    <property type="evidence" value="ECO:0007669"/>
    <property type="project" value="RHEA"/>
</dbReference>
<dbReference type="GO" id="GO:0006207">
    <property type="term" value="P:'de novo' pyrimidine nucleobase biosynthetic process"/>
    <property type="evidence" value="ECO:0007669"/>
    <property type="project" value="InterPro"/>
</dbReference>
<dbReference type="GO" id="GO:0044205">
    <property type="term" value="P:'de novo' UMP biosynthetic process"/>
    <property type="evidence" value="ECO:0007669"/>
    <property type="project" value="UniProtKB-UniRule"/>
</dbReference>
<dbReference type="GO" id="GO:0006541">
    <property type="term" value="P:glutamine metabolic process"/>
    <property type="evidence" value="ECO:0007669"/>
    <property type="project" value="InterPro"/>
</dbReference>
<dbReference type="GO" id="GO:0006526">
    <property type="term" value="P:L-arginine biosynthetic process"/>
    <property type="evidence" value="ECO:0007669"/>
    <property type="project" value="UniProtKB-UniRule"/>
</dbReference>
<dbReference type="CDD" id="cd01744">
    <property type="entry name" value="GATase1_CPSase"/>
    <property type="match status" value="1"/>
</dbReference>
<dbReference type="FunFam" id="3.40.50.880:FF:000065">
    <property type="entry name" value="Carbamoyl-phosphate synthase small chain"/>
    <property type="match status" value="1"/>
</dbReference>
<dbReference type="FunFam" id="3.50.30.20:FF:000001">
    <property type="entry name" value="Carbamoyl-phosphate synthase small chain"/>
    <property type="match status" value="1"/>
</dbReference>
<dbReference type="Gene3D" id="3.40.50.880">
    <property type="match status" value="1"/>
</dbReference>
<dbReference type="Gene3D" id="3.50.30.20">
    <property type="entry name" value="Carbamoyl-phosphate synthase small subunit, N-terminal domain"/>
    <property type="match status" value="1"/>
</dbReference>
<dbReference type="HAMAP" id="MF_01209">
    <property type="entry name" value="CPSase_S_chain"/>
    <property type="match status" value="1"/>
</dbReference>
<dbReference type="InterPro" id="IPR050472">
    <property type="entry name" value="Anth_synth/Amidotransfase"/>
</dbReference>
<dbReference type="InterPro" id="IPR006274">
    <property type="entry name" value="CarbamoylP_synth_ssu"/>
</dbReference>
<dbReference type="InterPro" id="IPR002474">
    <property type="entry name" value="CarbamoylP_synth_ssu_N"/>
</dbReference>
<dbReference type="InterPro" id="IPR036480">
    <property type="entry name" value="CarbP_synth_ssu_N_sf"/>
</dbReference>
<dbReference type="InterPro" id="IPR029062">
    <property type="entry name" value="Class_I_gatase-like"/>
</dbReference>
<dbReference type="InterPro" id="IPR035686">
    <property type="entry name" value="CPSase_GATase1"/>
</dbReference>
<dbReference type="InterPro" id="IPR017926">
    <property type="entry name" value="GATASE"/>
</dbReference>
<dbReference type="NCBIfam" id="TIGR01368">
    <property type="entry name" value="CPSaseIIsmall"/>
    <property type="match status" value="1"/>
</dbReference>
<dbReference type="NCBIfam" id="NF009475">
    <property type="entry name" value="PRK12838.1"/>
    <property type="match status" value="1"/>
</dbReference>
<dbReference type="PANTHER" id="PTHR43418:SF7">
    <property type="entry name" value="CARBAMOYL-PHOSPHATE SYNTHASE SMALL CHAIN"/>
    <property type="match status" value="1"/>
</dbReference>
<dbReference type="PANTHER" id="PTHR43418">
    <property type="entry name" value="MULTIFUNCTIONAL TRYPTOPHAN BIOSYNTHESIS PROTEIN-RELATED"/>
    <property type="match status" value="1"/>
</dbReference>
<dbReference type="Pfam" id="PF00988">
    <property type="entry name" value="CPSase_sm_chain"/>
    <property type="match status" value="1"/>
</dbReference>
<dbReference type="Pfam" id="PF00117">
    <property type="entry name" value="GATase"/>
    <property type="match status" value="1"/>
</dbReference>
<dbReference type="PRINTS" id="PR00097">
    <property type="entry name" value="ANTSNTHASEII"/>
</dbReference>
<dbReference type="PRINTS" id="PR00099">
    <property type="entry name" value="CPSGATASE"/>
</dbReference>
<dbReference type="PRINTS" id="PR00096">
    <property type="entry name" value="GATASE"/>
</dbReference>
<dbReference type="SMART" id="SM01097">
    <property type="entry name" value="CPSase_sm_chain"/>
    <property type="match status" value="1"/>
</dbReference>
<dbReference type="SUPFAM" id="SSF52021">
    <property type="entry name" value="Carbamoyl phosphate synthetase, small subunit N-terminal domain"/>
    <property type="match status" value="1"/>
</dbReference>
<dbReference type="SUPFAM" id="SSF52317">
    <property type="entry name" value="Class I glutamine amidotransferase-like"/>
    <property type="match status" value="1"/>
</dbReference>
<dbReference type="PROSITE" id="PS51273">
    <property type="entry name" value="GATASE_TYPE_1"/>
    <property type="match status" value="1"/>
</dbReference>
<proteinExistence type="inferred from homology"/>
<gene>
    <name evidence="1" type="primary">carA</name>
    <name type="ordered locus">LBL_2116</name>
</gene>
<reference key="1">
    <citation type="journal article" date="2006" name="Proc. Natl. Acad. Sci. U.S.A.">
        <title>Genome reduction in Leptospira borgpetersenii reflects limited transmission potential.</title>
        <authorList>
            <person name="Bulach D.M."/>
            <person name="Zuerner R.L."/>
            <person name="Wilson P."/>
            <person name="Seemann T."/>
            <person name="McGrath A."/>
            <person name="Cullen P.A."/>
            <person name="Davis J."/>
            <person name="Johnson M."/>
            <person name="Kuczek E."/>
            <person name="Alt D.P."/>
            <person name="Peterson-Burch B."/>
            <person name="Coppel R.L."/>
            <person name="Rood J.I."/>
            <person name="Davies J.K."/>
            <person name="Adler B."/>
        </authorList>
    </citation>
    <scope>NUCLEOTIDE SEQUENCE [LARGE SCALE GENOMIC DNA]</scope>
    <source>
        <strain>L550</strain>
    </source>
</reference>
<feature type="chain" id="PRO_1000138865" description="Carbamoyl phosphate synthase small chain">
    <location>
        <begin position="1"/>
        <end position="363"/>
    </location>
</feature>
<feature type="domain" description="Glutamine amidotransferase type-1" evidence="1">
    <location>
        <begin position="176"/>
        <end position="362"/>
    </location>
</feature>
<feature type="region of interest" description="CPSase" evidence="1">
    <location>
        <begin position="1"/>
        <end position="172"/>
    </location>
</feature>
<feature type="active site" description="Nucleophile" evidence="1">
    <location>
        <position position="252"/>
    </location>
</feature>
<feature type="active site" evidence="1">
    <location>
        <position position="335"/>
    </location>
</feature>
<feature type="active site" evidence="1">
    <location>
        <position position="337"/>
    </location>
</feature>
<feature type="binding site" evidence="1">
    <location>
        <position position="45"/>
    </location>
    <ligand>
        <name>L-glutamine</name>
        <dbReference type="ChEBI" id="CHEBI:58359"/>
    </ligand>
</feature>
<feature type="binding site" evidence="1">
    <location>
        <position position="224"/>
    </location>
    <ligand>
        <name>L-glutamine</name>
        <dbReference type="ChEBI" id="CHEBI:58359"/>
    </ligand>
</feature>
<feature type="binding site" evidence="1">
    <location>
        <position position="226"/>
    </location>
    <ligand>
        <name>L-glutamine</name>
        <dbReference type="ChEBI" id="CHEBI:58359"/>
    </ligand>
</feature>
<feature type="binding site" evidence="1">
    <location>
        <position position="253"/>
    </location>
    <ligand>
        <name>L-glutamine</name>
        <dbReference type="ChEBI" id="CHEBI:58359"/>
    </ligand>
</feature>
<feature type="binding site" evidence="1">
    <location>
        <position position="256"/>
    </location>
    <ligand>
        <name>L-glutamine</name>
        <dbReference type="ChEBI" id="CHEBI:58359"/>
    </ligand>
</feature>
<feature type="binding site" evidence="1">
    <location>
        <position position="294"/>
    </location>
    <ligand>
        <name>L-glutamine</name>
        <dbReference type="ChEBI" id="CHEBI:58359"/>
    </ligand>
</feature>
<feature type="binding site" evidence="1">
    <location>
        <position position="296"/>
    </location>
    <ligand>
        <name>L-glutamine</name>
        <dbReference type="ChEBI" id="CHEBI:58359"/>
    </ligand>
</feature>
<feature type="binding site" evidence="1">
    <location>
        <position position="297"/>
    </location>
    <ligand>
        <name>L-glutamine</name>
        <dbReference type="ChEBI" id="CHEBI:58359"/>
    </ligand>
</feature>
<name>CARA_LEPBL</name>
<comment type="function">
    <text evidence="1">Small subunit of the glutamine-dependent carbamoyl phosphate synthetase (CPSase). CPSase catalyzes the formation of carbamoyl phosphate from the ammonia moiety of glutamine, carbonate, and phosphate donated by ATP, constituting the first step of 2 biosynthetic pathways, one leading to arginine and/or urea and the other to pyrimidine nucleotides. The small subunit (glutamine amidotransferase) binds and cleaves glutamine to supply the large subunit with the substrate ammonia.</text>
</comment>
<comment type="catalytic activity">
    <reaction evidence="1">
        <text>hydrogencarbonate + L-glutamine + 2 ATP + H2O = carbamoyl phosphate + L-glutamate + 2 ADP + phosphate + 2 H(+)</text>
        <dbReference type="Rhea" id="RHEA:18633"/>
        <dbReference type="ChEBI" id="CHEBI:15377"/>
        <dbReference type="ChEBI" id="CHEBI:15378"/>
        <dbReference type="ChEBI" id="CHEBI:17544"/>
        <dbReference type="ChEBI" id="CHEBI:29985"/>
        <dbReference type="ChEBI" id="CHEBI:30616"/>
        <dbReference type="ChEBI" id="CHEBI:43474"/>
        <dbReference type="ChEBI" id="CHEBI:58228"/>
        <dbReference type="ChEBI" id="CHEBI:58359"/>
        <dbReference type="ChEBI" id="CHEBI:456216"/>
        <dbReference type="EC" id="6.3.5.5"/>
    </reaction>
</comment>
<comment type="catalytic activity">
    <molecule>Carbamoyl phosphate synthase small chain</molecule>
    <reaction evidence="1">
        <text>L-glutamine + H2O = L-glutamate + NH4(+)</text>
        <dbReference type="Rhea" id="RHEA:15889"/>
        <dbReference type="ChEBI" id="CHEBI:15377"/>
        <dbReference type="ChEBI" id="CHEBI:28938"/>
        <dbReference type="ChEBI" id="CHEBI:29985"/>
        <dbReference type="ChEBI" id="CHEBI:58359"/>
    </reaction>
</comment>
<comment type="pathway">
    <text evidence="1">Amino-acid biosynthesis; L-arginine biosynthesis; carbamoyl phosphate from bicarbonate: step 1/1.</text>
</comment>
<comment type="pathway">
    <text evidence="1">Pyrimidine metabolism; UMP biosynthesis via de novo pathway; (S)-dihydroorotate from bicarbonate: step 1/3.</text>
</comment>
<comment type="subunit">
    <text evidence="1">Composed of two chains; the small (or glutamine) chain promotes the hydrolysis of glutamine to ammonia, which is used by the large (or ammonia) chain to synthesize carbamoyl phosphate. Tetramer of heterodimers (alpha,beta)4.</text>
</comment>
<comment type="similarity">
    <text evidence="1">Belongs to the CarA family.</text>
</comment>
<organism>
    <name type="scientific">Leptospira borgpetersenii serovar Hardjo-bovis (strain L550)</name>
    <dbReference type="NCBI Taxonomy" id="355276"/>
    <lineage>
        <taxon>Bacteria</taxon>
        <taxon>Pseudomonadati</taxon>
        <taxon>Spirochaetota</taxon>
        <taxon>Spirochaetia</taxon>
        <taxon>Leptospirales</taxon>
        <taxon>Leptospiraceae</taxon>
        <taxon>Leptospira</taxon>
    </lineage>
</organism>